<dbReference type="EMBL" id="EF614270">
    <property type="protein sequence ID" value="ABQ81495.1"/>
    <property type="molecule type" value="Genomic_DNA"/>
</dbReference>
<dbReference type="EMBL" id="EF614270">
    <property type="protein sequence ID" value="ABQ81512.1"/>
    <property type="molecule type" value="Genomic_DNA"/>
</dbReference>
<dbReference type="GO" id="GO:0009570">
    <property type="term" value="C:chloroplast stroma"/>
    <property type="evidence" value="ECO:0007669"/>
    <property type="project" value="UniProtKB-SubCell"/>
</dbReference>
<dbReference type="GO" id="GO:0005524">
    <property type="term" value="F:ATP binding"/>
    <property type="evidence" value="ECO:0007669"/>
    <property type="project" value="UniProtKB-KW"/>
</dbReference>
<dbReference type="GO" id="GO:0016887">
    <property type="term" value="F:ATP hydrolysis activity"/>
    <property type="evidence" value="ECO:0007669"/>
    <property type="project" value="InterPro"/>
</dbReference>
<dbReference type="CDD" id="cd19505">
    <property type="entry name" value="RecA-like_Ycf2"/>
    <property type="match status" value="1"/>
</dbReference>
<dbReference type="Gene3D" id="3.40.50.300">
    <property type="entry name" value="P-loop containing nucleotide triphosphate hydrolases"/>
    <property type="match status" value="1"/>
</dbReference>
<dbReference type="HAMAP" id="MF_01330">
    <property type="entry name" value="Ycf2"/>
    <property type="match status" value="1"/>
</dbReference>
<dbReference type="InterPro" id="IPR003593">
    <property type="entry name" value="AAA+_ATPase"/>
</dbReference>
<dbReference type="InterPro" id="IPR003959">
    <property type="entry name" value="ATPase_AAA_core"/>
</dbReference>
<dbReference type="InterPro" id="IPR027417">
    <property type="entry name" value="P-loop_NTPase"/>
</dbReference>
<dbReference type="InterPro" id="IPR008543">
    <property type="entry name" value="Uncharacterised_Ycf2"/>
</dbReference>
<dbReference type="InterPro" id="IPR056777">
    <property type="entry name" value="Ycf2_N"/>
</dbReference>
<dbReference type="PANTHER" id="PTHR33078:SF51">
    <property type="entry name" value="PROTEIN TIC 214"/>
    <property type="match status" value="1"/>
</dbReference>
<dbReference type="PANTHER" id="PTHR33078">
    <property type="entry name" value="PROTEIN YCF2-RELATED"/>
    <property type="match status" value="1"/>
</dbReference>
<dbReference type="Pfam" id="PF00004">
    <property type="entry name" value="AAA"/>
    <property type="match status" value="1"/>
</dbReference>
<dbReference type="Pfam" id="PF05695">
    <property type="entry name" value="Ycf2"/>
    <property type="match status" value="1"/>
</dbReference>
<dbReference type="SMART" id="SM00382">
    <property type="entry name" value="AAA"/>
    <property type="match status" value="1"/>
</dbReference>
<dbReference type="SUPFAM" id="SSF52540">
    <property type="entry name" value="P-loop containing nucleoside triphosphate hydrolases"/>
    <property type="match status" value="1"/>
</dbReference>
<geneLocation type="chloroplast"/>
<protein>
    <recommendedName>
        <fullName evidence="1">Protein Ycf2</fullName>
    </recommendedName>
</protein>
<comment type="function">
    <text evidence="1">Probable ATPase of unknown function. Its presence in a non-photosynthetic plant (Epifagus virginiana) and experiments in tobacco indicate that it has an essential function which is probably not related to photosynthesis.</text>
</comment>
<comment type="subcellular location">
    <subcellularLocation>
        <location evidence="1">Plastid</location>
        <location evidence="1">Chloroplast stroma</location>
    </subcellularLocation>
</comment>
<comment type="similarity">
    <text evidence="1">Belongs to the Ycf2 family.</text>
</comment>
<keyword id="KW-0067">ATP-binding</keyword>
<keyword id="KW-0150">Chloroplast</keyword>
<keyword id="KW-0547">Nucleotide-binding</keyword>
<keyword id="KW-0934">Plastid</keyword>
<gene>
    <name evidence="1" type="primary">ycf2-A</name>
</gene>
<gene>
    <name evidence="1" type="primary">ycf2-B</name>
</gene>
<sequence length="2290" mass="268963">MKRYPFKSWIFELREILREIKNSHYFLDSWTRFDSVGSFTHIFFHQERFMKLFDPRIWSILLSRDSQGSTSNRYFTIKGVVLLVVAVLIYRINNRTMVERKNISLMGLLPIPMNFIGLRNDTLEEAFWSSNINRLIASLLYLPKRKKISESCFMDPKESTWVLPITKKRIMPESNWGSRWWRNRIGKKRDSSCKISNETVAGIEISFKEKDIKYLEFLFVSYTDDPIRKDHDWELFDRLSPRKKRNIINLNSGQLFEILVKHSICYLMSVFREKRPIEVKGFFKQQGAEATIQSNDIEHVSHLFSRDQWGISLQNCAQFHMWQFRQDLFVSWGKNPHESDFLRNASRENWIWLDNVWLVNKDRFFSKVRNVSSNMEYDSTRSLFVQVPDSSQWKGSSDQSRDHFDSISNEDSEYHTWINQTEIQQLKERSILWDPSFLQTERTEIESDRFPKCLSGYSSMYRLFTEREKQMNNHLLPEEIEEFLGNPTRSIRSFFSDRWSELHLGSNPTERSTRDQKSLKKQQDVSFVPPRRSENQEMVDIFKIITYLQNIVSIHPISSDPGCDMVPKDEPDMDRSNKISFLNKNPFFDLFHPFHDRNKGGYTLHHDFESESEERFQEIADLFTLSITEPDLVYHKGFAFSIDSYGLDQTKFLNEVFNSRDESKKKSLLVLPPIFDEENESFSRRIRKKSGRISCGNDLEDPKQKIVVFASKNIMEAVNQYRLIRNLIQIQYSTYGYIRNVLNRFFLMNGSDRNFEYGIQRDQIGTDTLNHITIMKYTINQHLSNLKKSQKKWFNPLISRTERSMNRDPNAYRYKWFNGSKNFQEHLEHFVSEQKNRFQVVIDRLRINQYSIDWSEVIDKQDLSKSLRFFLSKSLLFLSKSLLFLSKSLPFFFVSIGNIPIHRSEIHIYELKGPNDQLCNQLLESIGVQIVHLNKLKPFLLDDHDTSQRSKFLINGGTISPFLFNKIPKWMIDSSHTRKNRRKSFDNTDSYFSMISPDRDNWLNPVKPFHRSSLISSFYKAIRFLNNPHPFWFYCNKRFPLYVDVEKARINNYDLTYGQFLNILFIRNKIFSLCVGKKKHVFLERDTISPTESQVSDIFIPNDFPQSGDETYNLYKSFHLPIRSDPFVRRAIYSIADIYGTPLIEEQIVNFERTYCQPLSDMNISDSEGKNLHHQYLSFNSNMGLIHTPCSEKDFPSGRRKKKSIYLKKCVEKWRMYRTFQRDSAFSNLSKWNLFQTYMPWFLTSTGCKYLNFTLLDTFSDPLPILSSSPKFVSIFHDIMHGSDISWPIRQKKWWAILPQRNLISEISSKCLQNLLLSEEMIHRNNESPVPLIWTHLRSPNAREFLYSILFLLLVAGYLVRTHLLFVSRASSELQTELEKIKSLMIPSYMIDLRKLLDRYPTSELNSFWLKNLFLVALEQLGDSLEEIRGYANTLLGGGPAYGEKSIRSKKKYWNINLIDLISIIPNPINRITFSRDTRHLSRTSKEIYSLIRKRKNVNGDWIDDKIESWVANSDSIDDEEREFLVQFCTLATEKRIDQILLSLTHSDHLSKNDSGYQMIEQPGSIYLRYLVDIHQKYLMNYEFNRSCLAERRIFLAHYQTITYSQTSCRANSSHFPSHGKPFSLRLALSPSRGILVIGSIGTGRSYLVKYLATNSYLPFITVFPNKFLDDKPKGYLSDDIDIDDSDAIDDSDDIDDSDDIDDDLDTELLTMYMTPKIDRFDITPQFELAKAMSPCIIWIPNIHDLYVNESNYLSLGLLVNYLSRDCERCSTRKILVIASTHIPQKVDPALIAPNKLNTCIKIRRLLIPQQRKRFFILSYTRGFRLEKKMFHTNGFGSITMGSNARDLVALTNEALSISITQKKSIIDTNTIRAALHRQTWDLRSRVRSVQDHGIFFYQIGRAVAQNVLLSHCPIDPISIYMKKKLCKEGDSYLYKWYFELGTSIKKFTILLYLLSSSAGFVAQDLWSPPGPDEKNGITSYGFVENDSDLVHALLEVEGALVGSSRTEKDCSQFDNDRATLLLRSEPRNQLDMMQNGSCSIVDQRFLYEKDESDFEEGEGALDPQQIEEDLFNHIVWAPRIWRPCGNLFDCIESPNSLGFPYWARSSRGKRIIYHKEDEHQENDSEFLQSGTMQYQTRDRSSKEQGFFRISQFILDPADPFFFLFKDQPFVSVFSRREFFADQEMSKGLITSQTNPPTSLYKRWFIKNTQEKHFQLLIHRQRWLRTNSSLSNRSSRSNTPSESYQYLSNLFLSNGTLLDQMTKTLLRKRWLFPDEMKHLIHVTGERFPIP</sequence>
<name>YCF2_CERDE</name>
<proteinExistence type="inferred from homology"/>
<feature type="chain" id="PRO_0000343763" description="Protein Ycf2">
    <location>
        <begin position="1"/>
        <end position="2290"/>
    </location>
</feature>
<feature type="region of interest" description="Disordered" evidence="2">
    <location>
        <begin position="505"/>
        <end position="530"/>
    </location>
</feature>
<feature type="compositionally biased region" description="Basic and acidic residues" evidence="2">
    <location>
        <begin position="511"/>
        <end position="523"/>
    </location>
</feature>
<feature type="binding site" evidence="1">
    <location>
        <begin position="1639"/>
        <end position="1646"/>
    </location>
    <ligand>
        <name>ATP</name>
        <dbReference type="ChEBI" id="CHEBI:30616"/>
    </ligand>
</feature>
<organism>
    <name type="scientific">Ceratophyllum demersum</name>
    <name type="common">Rigid hornwort</name>
    <name type="synonym">Coontail</name>
    <dbReference type="NCBI Taxonomy" id="4428"/>
    <lineage>
        <taxon>Eukaryota</taxon>
        <taxon>Viridiplantae</taxon>
        <taxon>Streptophyta</taxon>
        <taxon>Embryophyta</taxon>
        <taxon>Tracheophyta</taxon>
        <taxon>Spermatophyta</taxon>
        <taxon>Magnoliopsida</taxon>
        <taxon>Ceratophyllales</taxon>
        <taxon>Ceratophyllaceae</taxon>
        <taxon>Ceratophyllum</taxon>
    </lineage>
</organism>
<accession>A8SEE7</accession>
<evidence type="ECO:0000255" key="1">
    <source>
        <dbReference type="HAMAP-Rule" id="MF_01330"/>
    </source>
</evidence>
<evidence type="ECO:0000256" key="2">
    <source>
        <dbReference type="SAM" id="MobiDB-lite"/>
    </source>
</evidence>
<reference key="1">
    <citation type="journal article" date="2007" name="Proc. Natl. Acad. Sci. U.S.A.">
        <title>Using plastid genome-scale data to resolve enigmatic relationships among basal angiosperms.</title>
        <authorList>
            <person name="Moore M.J."/>
            <person name="Bell C.D."/>
            <person name="Soltis P.S."/>
            <person name="Soltis D.E."/>
        </authorList>
    </citation>
    <scope>NUCLEOTIDE SEQUENCE [LARGE SCALE GENOMIC DNA]</scope>
</reference>